<protein>
    <recommendedName>
        <fullName evidence="1">Protein PsbN</fullName>
    </recommendedName>
</protein>
<name>PSBN_NELLU</name>
<gene>
    <name evidence="1" type="primary">psbN</name>
</gene>
<sequence length="43" mass="4696">METATLVAIFISGSLVSFTGYALYTAFGQPSQQLRDPFEEHGD</sequence>
<keyword id="KW-0150">Chloroplast</keyword>
<keyword id="KW-0472">Membrane</keyword>
<keyword id="KW-0934">Plastid</keyword>
<keyword id="KW-0793">Thylakoid</keyword>
<keyword id="KW-0812">Transmembrane</keyword>
<keyword id="KW-1133">Transmembrane helix</keyword>
<comment type="function">
    <text evidence="1">May play a role in photosystem I and II biogenesis.</text>
</comment>
<comment type="subcellular location">
    <subcellularLocation>
        <location evidence="1">Plastid</location>
        <location evidence="1">Chloroplast thylakoid membrane</location>
        <topology evidence="1">Single-pass membrane protein</topology>
    </subcellularLocation>
</comment>
<comment type="similarity">
    <text evidence="1">Belongs to the PsbN family.</text>
</comment>
<comment type="caution">
    <text evidence="1">Originally thought to be a component of PSII; based on experiments in Synechocystis, N.tabacum and barley, and its absence from PSII in T.elongatus and T.vulcanus, this is probably not true.</text>
</comment>
<geneLocation type="chloroplast"/>
<accession>Q6EYH4</accession>
<dbReference type="EMBL" id="AF528903">
    <property type="protein sequence ID" value="AAQ09399.1"/>
    <property type="molecule type" value="Genomic_DNA"/>
</dbReference>
<dbReference type="RefSeq" id="YP_004563895.1">
    <property type="nucleotide sequence ID" value="NC_015605.1"/>
</dbReference>
<dbReference type="SMR" id="Q6EYH4"/>
<dbReference type="GeneID" id="10743567"/>
<dbReference type="GO" id="GO:0009535">
    <property type="term" value="C:chloroplast thylakoid membrane"/>
    <property type="evidence" value="ECO:0007669"/>
    <property type="project" value="UniProtKB-SubCell"/>
</dbReference>
<dbReference type="GO" id="GO:0015979">
    <property type="term" value="P:photosynthesis"/>
    <property type="evidence" value="ECO:0007669"/>
    <property type="project" value="InterPro"/>
</dbReference>
<dbReference type="HAMAP" id="MF_00293">
    <property type="entry name" value="PSII_PsbN"/>
    <property type="match status" value="1"/>
</dbReference>
<dbReference type="InterPro" id="IPR003398">
    <property type="entry name" value="PSII_PsbN"/>
</dbReference>
<dbReference type="PANTHER" id="PTHR35326">
    <property type="entry name" value="PROTEIN PSBN"/>
    <property type="match status" value="1"/>
</dbReference>
<dbReference type="PANTHER" id="PTHR35326:SF3">
    <property type="entry name" value="PROTEIN PSBN"/>
    <property type="match status" value="1"/>
</dbReference>
<dbReference type="Pfam" id="PF02468">
    <property type="entry name" value="PsbN"/>
    <property type="match status" value="1"/>
</dbReference>
<feature type="chain" id="PRO_0000207927" description="Protein PsbN">
    <location>
        <begin position="1"/>
        <end position="43"/>
    </location>
</feature>
<feature type="transmembrane region" description="Helical" evidence="1">
    <location>
        <begin position="5"/>
        <end position="27"/>
    </location>
</feature>
<evidence type="ECO:0000255" key="1">
    <source>
        <dbReference type="HAMAP-Rule" id="MF_00293"/>
    </source>
</evidence>
<reference key="1">
    <citation type="submission" date="2002-07" db="EMBL/GenBank/DDBJ databases">
        <title>Parsing out signal and noise for seed-plant phylogenetic inference.</title>
        <authorList>
            <person name="Graham S.W."/>
            <person name="Rai H.S."/>
            <person name="Ikegami K."/>
            <person name="Reeves P.A."/>
            <person name="Olmstead R.G."/>
        </authorList>
    </citation>
    <scope>NUCLEOTIDE SEQUENCE [GENOMIC DNA]</scope>
</reference>
<proteinExistence type="inferred from homology"/>
<organism>
    <name type="scientific">Nelumbo lutea</name>
    <name type="common">American lotus</name>
    <name type="synonym">Nelumbo nucifera subsp. lutea</name>
    <dbReference type="NCBI Taxonomy" id="4431"/>
    <lineage>
        <taxon>Eukaryota</taxon>
        <taxon>Viridiplantae</taxon>
        <taxon>Streptophyta</taxon>
        <taxon>Embryophyta</taxon>
        <taxon>Tracheophyta</taxon>
        <taxon>Spermatophyta</taxon>
        <taxon>Magnoliopsida</taxon>
        <taxon>Proteales</taxon>
        <taxon>Nelumbonaceae</taxon>
        <taxon>Nelumbo</taxon>
    </lineage>
</organism>